<sequence>MAKIKKGDQVIVIAGKEKGKQGTVLSVSEDRVKVEGLNLVKKHQKPNRVTGAEGGIVTQEASLHISNVAVFNATTQKADRVGYQVDENGAKTRVYKSNGESVAVAK</sequence>
<feature type="chain" id="PRO_0000241555" description="Large ribosomal subunit protein uL24">
    <location>
        <begin position="1"/>
        <end position="106"/>
    </location>
</feature>
<gene>
    <name evidence="1" type="primary">rplX</name>
    <name type="ordered locus">ACIAD3208</name>
</gene>
<proteinExistence type="inferred from homology"/>
<dbReference type="EMBL" id="CR543861">
    <property type="protein sequence ID" value="CAG69892.1"/>
    <property type="molecule type" value="Genomic_DNA"/>
</dbReference>
<dbReference type="RefSeq" id="WP_004924123.1">
    <property type="nucleotide sequence ID" value="NC_005966.1"/>
</dbReference>
<dbReference type="SMR" id="Q6F7S3"/>
<dbReference type="STRING" id="202950.GCA_001485005_02947"/>
<dbReference type="GeneID" id="67513062"/>
<dbReference type="KEGG" id="aci:ACIAD3208"/>
<dbReference type="eggNOG" id="COG0198">
    <property type="taxonomic scope" value="Bacteria"/>
</dbReference>
<dbReference type="HOGENOM" id="CLU_093315_2_2_6"/>
<dbReference type="OrthoDB" id="9807419at2"/>
<dbReference type="BioCyc" id="ASP62977:ACIAD_RS14540-MONOMER"/>
<dbReference type="Proteomes" id="UP000000430">
    <property type="component" value="Chromosome"/>
</dbReference>
<dbReference type="GO" id="GO:1990904">
    <property type="term" value="C:ribonucleoprotein complex"/>
    <property type="evidence" value="ECO:0007669"/>
    <property type="project" value="UniProtKB-KW"/>
</dbReference>
<dbReference type="GO" id="GO:0005840">
    <property type="term" value="C:ribosome"/>
    <property type="evidence" value="ECO:0007669"/>
    <property type="project" value="UniProtKB-KW"/>
</dbReference>
<dbReference type="GO" id="GO:0019843">
    <property type="term" value="F:rRNA binding"/>
    <property type="evidence" value="ECO:0007669"/>
    <property type="project" value="UniProtKB-UniRule"/>
</dbReference>
<dbReference type="GO" id="GO:0003735">
    <property type="term" value="F:structural constituent of ribosome"/>
    <property type="evidence" value="ECO:0007669"/>
    <property type="project" value="InterPro"/>
</dbReference>
<dbReference type="GO" id="GO:0006412">
    <property type="term" value="P:translation"/>
    <property type="evidence" value="ECO:0007669"/>
    <property type="project" value="UniProtKB-UniRule"/>
</dbReference>
<dbReference type="CDD" id="cd06089">
    <property type="entry name" value="KOW_RPL26"/>
    <property type="match status" value="1"/>
</dbReference>
<dbReference type="FunFam" id="2.30.30.30:FF:000004">
    <property type="entry name" value="50S ribosomal protein L24"/>
    <property type="match status" value="1"/>
</dbReference>
<dbReference type="Gene3D" id="2.30.30.30">
    <property type="match status" value="1"/>
</dbReference>
<dbReference type="HAMAP" id="MF_01326_B">
    <property type="entry name" value="Ribosomal_uL24_B"/>
    <property type="match status" value="1"/>
</dbReference>
<dbReference type="InterPro" id="IPR005824">
    <property type="entry name" value="KOW"/>
</dbReference>
<dbReference type="InterPro" id="IPR014722">
    <property type="entry name" value="Rib_uL2_dom2"/>
</dbReference>
<dbReference type="InterPro" id="IPR003256">
    <property type="entry name" value="Ribosomal_uL24"/>
</dbReference>
<dbReference type="InterPro" id="IPR005825">
    <property type="entry name" value="Ribosomal_uL24_CS"/>
</dbReference>
<dbReference type="InterPro" id="IPR041988">
    <property type="entry name" value="Ribosomal_uL24_KOW"/>
</dbReference>
<dbReference type="InterPro" id="IPR008991">
    <property type="entry name" value="Translation_prot_SH3-like_sf"/>
</dbReference>
<dbReference type="NCBIfam" id="TIGR01079">
    <property type="entry name" value="rplX_bact"/>
    <property type="match status" value="1"/>
</dbReference>
<dbReference type="PANTHER" id="PTHR12903">
    <property type="entry name" value="MITOCHONDRIAL RIBOSOMAL PROTEIN L24"/>
    <property type="match status" value="1"/>
</dbReference>
<dbReference type="Pfam" id="PF00467">
    <property type="entry name" value="KOW"/>
    <property type="match status" value="1"/>
</dbReference>
<dbReference type="Pfam" id="PF17136">
    <property type="entry name" value="ribosomal_L24"/>
    <property type="match status" value="1"/>
</dbReference>
<dbReference type="SMART" id="SM00739">
    <property type="entry name" value="KOW"/>
    <property type="match status" value="1"/>
</dbReference>
<dbReference type="SUPFAM" id="SSF50104">
    <property type="entry name" value="Translation proteins SH3-like domain"/>
    <property type="match status" value="1"/>
</dbReference>
<dbReference type="PROSITE" id="PS01108">
    <property type="entry name" value="RIBOSOMAL_L24"/>
    <property type="match status" value="1"/>
</dbReference>
<organism>
    <name type="scientific">Acinetobacter baylyi (strain ATCC 33305 / BD413 / ADP1)</name>
    <dbReference type="NCBI Taxonomy" id="62977"/>
    <lineage>
        <taxon>Bacteria</taxon>
        <taxon>Pseudomonadati</taxon>
        <taxon>Pseudomonadota</taxon>
        <taxon>Gammaproteobacteria</taxon>
        <taxon>Moraxellales</taxon>
        <taxon>Moraxellaceae</taxon>
        <taxon>Acinetobacter</taxon>
    </lineage>
</organism>
<evidence type="ECO:0000255" key="1">
    <source>
        <dbReference type="HAMAP-Rule" id="MF_01326"/>
    </source>
</evidence>
<evidence type="ECO:0000305" key="2"/>
<comment type="function">
    <text evidence="1">One of two assembly initiator proteins, it binds directly to the 5'-end of the 23S rRNA, where it nucleates assembly of the 50S subunit.</text>
</comment>
<comment type="function">
    <text evidence="1">One of the proteins that surrounds the polypeptide exit tunnel on the outside of the subunit.</text>
</comment>
<comment type="subunit">
    <text evidence="1">Part of the 50S ribosomal subunit.</text>
</comment>
<comment type="similarity">
    <text evidence="1">Belongs to the universal ribosomal protein uL24 family.</text>
</comment>
<protein>
    <recommendedName>
        <fullName evidence="1">Large ribosomal subunit protein uL24</fullName>
    </recommendedName>
    <alternativeName>
        <fullName evidence="2">50S ribosomal protein L24</fullName>
    </alternativeName>
</protein>
<name>RL24_ACIAD</name>
<reference key="1">
    <citation type="journal article" date="2004" name="Nucleic Acids Res.">
        <title>Unique features revealed by the genome sequence of Acinetobacter sp. ADP1, a versatile and naturally transformation competent bacterium.</title>
        <authorList>
            <person name="Barbe V."/>
            <person name="Vallenet D."/>
            <person name="Fonknechten N."/>
            <person name="Kreimeyer A."/>
            <person name="Oztas S."/>
            <person name="Labarre L."/>
            <person name="Cruveiller S."/>
            <person name="Robert C."/>
            <person name="Duprat S."/>
            <person name="Wincker P."/>
            <person name="Ornston L.N."/>
            <person name="Weissenbach J."/>
            <person name="Marliere P."/>
            <person name="Cohen G.N."/>
            <person name="Medigue C."/>
        </authorList>
    </citation>
    <scope>NUCLEOTIDE SEQUENCE [LARGE SCALE GENOMIC DNA]</scope>
    <source>
        <strain>ATCC 33305 / BD413 / ADP1</strain>
    </source>
</reference>
<keyword id="KW-0687">Ribonucleoprotein</keyword>
<keyword id="KW-0689">Ribosomal protein</keyword>
<keyword id="KW-0694">RNA-binding</keyword>
<keyword id="KW-0699">rRNA-binding</keyword>
<accession>Q6F7S3</accession>